<accession>Q2SXN8</accession>
<feature type="chain" id="PRO_0000262343" description="N-succinylarginine dihydrolase">
    <location>
        <begin position="1"/>
        <end position="446"/>
    </location>
</feature>
<feature type="active site" evidence="1">
    <location>
        <position position="174"/>
    </location>
</feature>
<feature type="active site" evidence="1">
    <location>
        <position position="249"/>
    </location>
</feature>
<feature type="active site" description="Nucleophile" evidence="1">
    <location>
        <position position="370"/>
    </location>
</feature>
<feature type="binding site" evidence="1">
    <location>
        <begin position="19"/>
        <end position="28"/>
    </location>
    <ligand>
        <name>substrate</name>
    </ligand>
</feature>
<feature type="binding site" evidence="1">
    <location>
        <position position="110"/>
    </location>
    <ligand>
        <name>substrate</name>
    </ligand>
</feature>
<feature type="binding site" evidence="1">
    <location>
        <begin position="137"/>
        <end position="138"/>
    </location>
    <ligand>
        <name>substrate</name>
    </ligand>
</feature>
<feature type="binding site" evidence="1">
    <location>
        <position position="213"/>
    </location>
    <ligand>
        <name>substrate</name>
    </ligand>
</feature>
<feature type="binding site" evidence="1">
    <location>
        <position position="251"/>
    </location>
    <ligand>
        <name>substrate</name>
    </ligand>
</feature>
<feature type="binding site" evidence="1">
    <location>
        <position position="364"/>
    </location>
    <ligand>
        <name>substrate</name>
    </ligand>
</feature>
<name>ASTB_BURTA</name>
<protein>
    <recommendedName>
        <fullName evidence="1">N-succinylarginine dihydrolase</fullName>
        <ecNumber evidence="1">3.5.3.23</ecNumber>
    </recommendedName>
</protein>
<proteinExistence type="inferred from homology"/>
<organism>
    <name type="scientific">Burkholderia thailandensis (strain ATCC 700388 / DSM 13276 / CCUG 48851 / CIP 106301 / E264)</name>
    <dbReference type="NCBI Taxonomy" id="271848"/>
    <lineage>
        <taxon>Bacteria</taxon>
        <taxon>Pseudomonadati</taxon>
        <taxon>Pseudomonadota</taxon>
        <taxon>Betaproteobacteria</taxon>
        <taxon>Burkholderiales</taxon>
        <taxon>Burkholderiaceae</taxon>
        <taxon>Burkholderia</taxon>
        <taxon>pseudomallei group</taxon>
    </lineage>
</organism>
<comment type="function">
    <text evidence="1">Catalyzes the hydrolysis of N(2)-succinylarginine into N(2)-succinylornithine, ammonia and CO(2).</text>
</comment>
<comment type="catalytic activity">
    <reaction evidence="1">
        <text>N(2)-succinyl-L-arginine + 2 H2O + 2 H(+) = N(2)-succinyl-L-ornithine + 2 NH4(+) + CO2</text>
        <dbReference type="Rhea" id="RHEA:19533"/>
        <dbReference type="ChEBI" id="CHEBI:15377"/>
        <dbReference type="ChEBI" id="CHEBI:15378"/>
        <dbReference type="ChEBI" id="CHEBI:16526"/>
        <dbReference type="ChEBI" id="CHEBI:28938"/>
        <dbReference type="ChEBI" id="CHEBI:58241"/>
        <dbReference type="ChEBI" id="CHEBI:58514"/>
        <dbReference type="EC" id="3.5.3.23"/>
    </reaction>
</comment>
<comment type="pathway">
    <text evidence="1">Amino-acid degradation; L-arginine degradation via AST pathway; L-glutamate and succinate from L-arginine: step 2/5.</text>
</comment>
<comment type="subunit">
    <text evidence="1">Homodimer.</text>
</comment>
<comment type="similarity">
    <text evidence="1">Belongs to the succinylarginine dihydrolase family.</text>
</comment>
<reference key="1">
    <citation type="journal article" date="2005" name="BMC Genomics">
        <title>Bacterial genome adaptation to niches: divergence of the potential virulence genes in three Burkholderia species of different survival strategies.</title>
        <authorList>
            <person name="Kim H.S."/>
            <person name="Schell M.A."/>
            <person name="Yu Y."/>
            <person name="Ulrich R.L."/>
            <person name="Sarria S.H."/>
            <person name="Nierman W.C."/>
            <person name="DeShazer D."/>
        </authorList>
    </citation>
    <scope>NUCLEOTIDE SEQUENCE [LARGE SCALE GENOMIC DNA]</scope>
    <source>
        <strain>ATCC 700388 / DSM 13276 / CCUG 48851 / CIP 106301 / E264</strain>
    </source>
</reference>
<gene>
    <name evidence="1" type="primary">astB</name>
    <name type="ordered locus">BTH_I1779</name>
</gene>
<keyword id="KW-0056">Arginine metabolism</keyword>
<keyword id="KW-0378">Hydrolase</keyword>
<dbReference type="EC" id="3.5.3.23" evidence="1"/>
<dbReference type="EMBL" id="CP000086">
    <property type="protein sequence ID" value="ABC38096.1"/>
    <property type="molecule type" value="Genomic_DNA"/>
</dbReference>
<dbReference type="RefSeq" id="WP_009890067.1">
    <property type="nucleotide sequence ID" value="NZ_CP008785.1"/>
</dbReference>
<dbReference type="SMR" id="Q2SXN8"/>
<dbReference type="GeneID" id="45121508"/>
<dbReference type="KEGG" id="bte:BTH_I1779"/>
<dbReference type="HOGENOM" id="CLU_053835_0_0_4"/>
<dbReference type="UniPathway" id="UPA00185">
    <property type="reaction ID" value="UER00280"/>
</dbReference>
<dbReference type="Proteomes" id="UP000001930">
    <property type="component" value="Chromosome I"/>
</dbReference>
<dbReference type="GO" id="GO:0009015">
    <property type="term" value="F:N-succinylarginine dihydrolase activity"/>
    <property type="evidence" value="ECO:0007669"/>
    <property type="project" value="UniProtKB-UniRule"/>
</dbReference>
<dbReference type="GO" id="GO:0019544">
    <property type="term" value="P:arginine catabolic process to glutamate"/>
    <property type="evidence" value="ECO:0007669"/>
    <property type="project" value="UniProtKB-UniRule"/>
</dbReference>
<dbReference type="GO" id="GO:0019545">
    <property type="term" value="P:arginine catabolic process to succinate"/>
    <property type="evidence" value="ECO:0007669"/>
    <property type="project" value="UniProtKB-UniRule"/>
</dbReference>
<dbReference type="Gene3D" id="3.75.10.20">
    <property type="entry name" value="Succinylarginine dihydrolase"/>
    <property type="match status" value="1"/>
</dbReference>
<dbReference type="HAMAP" id="MF_01172">
    <property type="entry name" value="AstB"/>
    <property type="match status" value="1"/>
</dbReference>
<dbReference type="InterPro" id="IPR037031">
    <property type="entry name" value="AstB_sf"/>
</dbReference>
<dbReference type="InterPro" id="IPR007079">
    <property type="entry name" value="SuccinylArg_d-Hdrlase_AstB"/>
</dbReference>
<dbReference type="NCBIfam" id="TIGR03241">
    <property type="entry name" value="arg_catab_astB"/>
    <property type="match status" value="1"/>
</dbReference>
<dbReference type="NCBIfam" id="NF009789">
    <property type="entry name" value="PRK13281.1"/>
    <property type="match status" value="1"/>
</dbReference>
<dbReference type="PANTHER" id="PTHR30420">
    <property type="entry name" value="N-SUCCINYLARGININE DIHYDROLASE"/>
    <property type="match status" value="1"/>
</dbReference>
<dbReference type="PANTHER" id="PTHR30420:SF2">
    <property type="entry name" value="N-SUCCINYLARGININE DIHYDROLASE"/>
    <property type="match status" value="1"/>
</dbReference>
<dbReference type="Pfam" id="PF04996">
    <property type="entry name" value="AstB"/>
    <property type="match status" value="1"/>
</dbReference>
<dbReference type="SUPFAM" id="SSF55909">
    <property type="entry name" value="Pentein"/>
    <property type="match status" value="1"/>
</dbReference>
<evidence type="ECO:0000255" key="1">
    <source>
        <dbReference type="HAMAP-Rule" id="MF_01172"/>
    </source>
</evidence>
<sequence length="446" mass="48156">MNAKEANFDGLVGPTHNYAGLSFGNVASLSNEKSDANPKAAAKQGLRKMKQLADLGFAQGVLPPQERPSLRLLRELGFSGKDADVIAKAAKQAPEMLAAASSASAMWTANAATVSPSADTSDGRVHFTPANLCSKLHRAIEHESTRRTLAAIFADEARFAVHDALPGTPALGDEGAANHTRFCSEYGAPGVEFFVYGRAEYRRGPEPTRFPARQTFEASRAVAQRHGLREEATIYAQQSPDVIDAGVFHNDVIAVGNRDTLFCHERAFVDKQAVYDALTASLGALGARLNVIEVPERAVSVADAVGSYLFNSQLLTREDGRQLLVVPQECRENANVSAYLDALAAGNGPIRDVRVFDLRESMKNGGGPACLRLRVVLNDAERAAVKPNVWIGDALFASLDAWIDKHYRDRLSPADLADPALLEESRTALDELTQILGLGSLYDFQR</sequence>